<accession>Q6P6I6</accession>
<accession>Q8CG13</accession>
<accession>Q9CXJ7</accession>
<accession>Q9DCQ9</accession>
<keyword id="KW-0025">Alternative splicing</keyword>
<keyword id="KW-0175">Coiled coil</keyword>
<keyword id="KW-0240">DNA-directed RNA polymerase</keyword>
<keyword id="KW-0539">Nucleus</keyword>
<keyword id="KW-0597">Phosphoprotein</keyword>
<keyword id="KW-1185">Reference proteome</keyword>
<keyword id="KW-0804">Transcription</keyword>
<reference key="1">
    <citation type="journal article" date="2005" name="Science">
        <title>The transcriptional landscape of the mammalian genome.</title>
        <authorList>
            <person name="Carninci P."/>
            <person name="Kasukawa T."/>
            <person name="Katayama S."/>
            <person name="Gough J."/>
            <person name="Frith M.C."/>
            <person name="Maeda N."/>
            <person name="Oyama R."/>
            <person name="Ravasi T."/>
            <person name="Lenhard B."/>
            <person name="Wells C."/>
            <person name="Kodzius R."/>
            <person name="Shimokawa K."/>
            <person name="Bajic V.B."/>
            <person name="Brenner S.E."/>
            <person name="Batalov S."/>
            <person name="Forrest A.R."/>
            <person name="Zavolan M."/>
            <person name="Davis M.J."/>
            <person name="Wilming L.G."/>
            <person name="Aidinis V."/>
            <person name="Allen J.E."/>
            <person name="Ambesi-Impiombato A."/>
            <person name="Apweiler R."/>
            <person name="Aturaliya R.N."/>
            <person name="Bailey T.L."/>
            <person name="Bansal M."/>
            <person name="Baxter L."/>
            <person name="Beisel K.W."/>
            <person name="Bersano T."/>
            <person name="Bono H."/>
            <person name="Chalk A.M."/>
            <person name="Chiu K.P."/>
            <person name="Choudhary V."/>
            <person name="Christoffels A."/>
            <person name="Clutterbuck D.R."/>
            <person name="Crowe M.L."/>
            <person name="Dalla E."/>
            <person name="Dalrymple B.P."/>
            <person name="de Bono B."/>
            <person name="Della Gatta G."/>
            <person name="di Bernardo D."/>
            <person name="Down T."/>
            <person name="Engstrom P."/>
            <person name="Fagiolini M."/>
            <person name="Faulkner G."/>
            <person name="Fletcher C.F."/>
            <person name="Fukushima T."/>
            <person name="Furuno M."/>
            <person name="Futaki S."/>
            <person name="Gariboldi M."/>
            <person name="Georgii-Hemming P."/>
            <person name="Gingeras T.R."/>
            <person name="Gojobori T."/>
            <person name="Green R.E."/>
            <person name="Gustincich S."/>
            <person name="Harbers M."/>
            <person name="Hayashi Y."/>
            <person name="Hensch T.K."/>
            <person name="Hirokawa N."/>
            <person name="Hill D."/>
            <person name="Huminiecki L."/>
            <person name="Iacono M."/>
            <person name="Ikeo K."/>
            <person name="Iwama A."/>
            <person name="Ishikawa T."/>
            <person name="Jakt M."/>
            <person name="Kanapin A."/>
            <person name="Katoh M."/>
            <person name="Kawasawa Y."/>
            <person name="Kelso J."/>
            <person name="Kitamura H."/>
            <person name="Kitano H."/>
            <person name="Kollias G."/>
            <person name="Krishnan S.P."/>
            <person name="Kruger A."/>
            <person name="Kummerfeld S.K."/>
            <person name="Kurochkin I.V."/>
            <person name="Lareau L.F."/>
            <person name="Lazarevic D."/>
            <person name="Lipovich L."/>
            <person name="Liu J."/>
            <person name="Liuni S."/>
            <person name="McWilliam S."/>
            <person name="Madan Babu M."/>
            <person name="Madera M."/>
            <person name="Marchionni L."/>
            <person name="Matsuda H."/>
            <person name="Matsuzawa S."/>
            <person name="Miki H."/>
            <person name="Mignone F."/>
            <person name="Miyake S."/>
            <person name="Morris K."/>
            <person name="Mottagui-Tabar S."/>
            <person name="Mulder N."/>
            <person name="Nakano N."/>
            <person name="Nakauchi H."/>
            <person name="Ng P."/>
            <person name="Nilsson R."/>
            <person name="Nishiguchi S."/>
            <person name="Nishikawa S."/>
            <person name="Nori F."/>
            <person name="Ohara O."/>
            <person name="Okazaki Y."/>
            <person name="Orlando V."/>
            <person name="Pang K.C."/>
            <person name="Pavan W.J."/>
            <person name="Pavesi G."/>
            <person name="Pesole G."/>
            <person name="Petrovsky N."/>
            <person name="Piazza S."/>
            <person name="Reed J."/>
            <person name="Reid J.F."/>
            <person name="Ring B.Z."/>
            <person name="Ringwald M."/>
            <person name="Rost B."/>
            <person name="Ruan Y."/>
            <person name="Salzberg S.L."/>
            <person name="Sandelin A."/>
            <person name="Schneider C."/>
            <person name="Schoenbach C."/>
            <person name="Sekiguchi K."/>
            <person name="Semple C.A."/>
            <person name="Seno S."/>
            <person name="Sessa L."/>
            <person name="Sheng Y."/>
            <person name="Shibata Y."/>
            <person name="Shimada H."/>
            <person name="Shimada K."/>
            <person name="Silva D."/>
            <person name="Sinclair B."/>
            <person name="Sperling S."/>
            <person name="Stupka E."/>
            <person name="Sugiura K."/>
            <person name="Sultana R."/>
            <person name="Takenaka Y."/>
            <person name="Taki K."/>
            <person name="Tammoja K."/>
            <person name="Tan S.L."/>
            <person name="Tang S."/>
            <person name="Taylor M.S."/>
            <person name="Tegner J."/>
            <person name="Teichmann S.A."/>
            <person name="Ueda H.R."/>
            <person name="van Nimwegen E."/>
            <person name="Verardo R."/>
            <person name="Wei C.L."/>
            <person name="Yagi K."/>
            <person name="Yamanishi H."/>
            <person name="Zabarovsky E."/>
            <person name="Zhu S."/>
            <person name="Zimmer A."/>
            <person name="Hide W."/>
            <person name="Bult C."/>
            <person name="Grimmond S.M."/>
            <person name="Teasdale R.D."/>
            <person name="Liu E.T."/>
            <person name="Brusic V."/>
            <person name="Quackenbush J."/>
            <person name="Wahlestedt C."/>
            <person name="Mattick J.S."/>
            <person name="Hume D.A."/>
            <person name="Kai C."/>
            <person name="Sasaki D."/>
            <person name="Tomaru Y."/>
            <person name="Fukuda S."/>
            <person name="Kanamori-Katayama M."/>
            <person name="Suzuki M."/>
            <person name="Aoki J."/>
            <person name="Arakawa T."/>
            <person name="Iida J."/>
            <person name="Imamura K."/>
            <person name="Itoh M."/>
            <person name="Kato T."/>
            <person name="Kawaji H."/>
            <person name="Kawagashira N."/>
            <person name="Kawashima T."/>
            <person name="Kojima M."/>
            <person name="Kondo S."/>
            <person name="Konno H."/>
            <person name="Nakano K."/>
            <person name="Ninomiya N."/>
            <person name="Nishio T."/>
            <person name="Okada M."/>
            <person name="Plessy C."/>
            <person name="Shibata K."/>
            <person name="Shiraki T."/>
            <person name="Suzuki S."/>
            <person name="Tagami M."/>
            <person name="Waki K."/>
            <person name="Watahiki A."/>
            <person name="Okamura-Oho Y."/>
            <person name="Suzuki H."/>
            <person name="Kawai J."/>
            <person name="Hayashizaki Y."/>
        </authorList>
    </citation>
    <scope>NUCLEOTIDE SEQUENCE [LARGE SCALE MRNA] (ISOFORMS 1 AND 2)</scope>
    <source>
        <strain>C57BL/6J</strain>
        <tissue>Embryo</tissue>
        <tissue>Embryonic eye</tissue>
        <tissue>Embryonic head</tissue>
        <tissue>Kidney</tissue>
    </source>
</reference>
<reference key="2">
    <citation type="journal article" date="2004" name="Genome Res.">
        <title>The status, quality, and expansion of the NIH full-length cDNA project: the Mammalian Gene Collection (MGC).</title>
        <authorList>
            <consortium name="The MGC Project Team"/>
        </authorList>
    </citation>
    <scope>NUCLEOTIDE SEQUENCE [LARGE SCALE MRNA] (ISOFORM 1)</scope>
    <source>
        <strain>129</strain>
        <strain>Czech II</strain>
        <tissue>Mammary tumor</tissue>
    </source>
</reference>
<reference key="3">
    <citation type="journal article" date="2001" name="Cytogenet. Cell Genet.">
        <title>The mouse orthologue of the human ionotropic glutamate receptor-like gene (GRINL1A) maps to mouse chromosome 9.</title>
        <authorList>
            <person name="Wydner K.S."/>
            <person name="Mohan Raj B.K."/>
            <person name="Sciorra L.J."/>
            <person name="Roginski R.S."/>
        </authorList>
    </citation>
    <scope>NUCLEOTIDE SEQUENCE [GENOMIC DNA] OF 37-45</scope>
    <scope>IDENTIFICATION</scope>
    <source>
        <strain>C57BL/6J</strain>
    </source>
</reference>
<comment type="function">
    <text evidence="2">Appears to be a stable component of the Pol II(G) complex form of RNA polymerase II (Pol II). Pol II synthesizes mRNA precursors and many functional non-coding RNAs and is the central component of the basal RNA polymerase II transcription machinery. May play a role in the Mediator complex-dependent regulation of transcription activation. Acts as a negative regulator of transcriptional activation; this repression is relieved by the Mediator complex, which restores Pol II(G) activator-dependent transcription to a level equivalent to that of Pol II.</text>
</comment>
<comment type="subunit">
    <text evidence="2">Component of the Pol II(G) complex, which contains the RNA polymerase II (Pol II) core complex subunits and POLR2M isoform 1. Pol II(G) appears to be an abundant form of Pol II.</text>
</comment>
<comment type="subcellular location">
    <subcellularLocation>
        <location evidence="1">Nucleus</location>
    </subcellularLocation>
</comment>
<comment type="alternative products">
    <event type="alternative splicing"/>
    <isoform>
        <id>Q6P6I6-1</id>
        <name>1</name>
        <sequence type="displayed"/>
    </isoform>
    <isoform>
        <id>Q6P6I6-2</id>
        <name>2</name>
        <sequence type="described" ref="VSP_032623"/>
    </isoform>
</comment>
<comment type="PTM">
    <text evidence="2">Dephosphorylated at Ser-268 by the PNUTS-PP1 complex, promoting RNA polymerase II transcription pause-release.</text>
</comment>
<comment type="similarity">
    <text evidence="6">Belongs to the GRINL1 family.</text>
</comment>
<sequence length="366" mass="41237">MFSLPRGFEPPAPEDLGRQSSAELRERLRRQERLLRNEKFICKLPDKGKKISDTVAKLKAAISEREEVRGRSELFHPVSVDCKLRQKATTRADTDVDKAQSSDLMLDTSSLDPDCSSIDIKSSKSTSETQGPTHLTHRGNEETLEAGYTVNSSPAAHIRARAPSSEVKEHLPQHSVSSQEEEISSSIDSLFITKLQKITIADQSEPSEENTSTENFPELQSETPKKPHYMKVLEMRARNPVPPPHKFKTNVLPTQQSDSPSHCQRGQSPASSEEQRRRARQHLDDITAARLLPLHHLPAQLLSIEESLALQREQKQNYEEMQAKLAAQKLAERLNIKMQSYNPEGESSGRYREVRDEADAQSSDEC</sequence>
<feature type="chain" id="PRO_0000326230" description="DNA-directed RNA polymerase II subunit GRINL1A">
    <location>
        <begin position="1"/>
        <end position="366"/>
    </location>
</feature>
<feature type="region of interest" description="Disordered" evidence="4">
    <location>
        <begin position="1"/>
        <end position="23"/>
    </location>
</feature>
<feature type="region of interest" description="Important for transcription repressor activity" evidence="2">
    <location>
        <begin position="29"/>
        <end position="68"/>
    </location>
</feature>
<feature type="region of interest" description="Disordered" evidence="4">
    <location>
        <begin position="88"/>
        <end position="140"/>
    </location>
</feature>
<feature type="region of interest" description="Disordered" evidence="4">
    <location>
        <begin position="158"/>
        <end position="182"/>
    </location>
</feature>
<feature type="region of interest" description="Disordered" evidence="4">
    <location>
        <begin position="201"/>
        <end position="225"/>
    </location>
</feature>
<feature type="region of interest" description="Interaction with Pol II" evidence="2">
    <location>
        <begin position="225"/>
        <end position="296"/>
    </location>
</feature>
<feature type="region of interest" description="Disordered" evidence="4">
    <location>
        <begin position="237"/>
        <end position="280"/>
    </location>
</feature>
<feature type="region of interest" description="Important for transcription repressor activity" evidence="2">
    <location>
        <begin position="297"/>
        <end position="312"/>
    </location>
</feature>
<feature type="region of interest" description="Interaction with Pol II" evidence="2">
    <location>
        <begin position="313"/>
        <end position="338"/>
    </location>
</feature>
<feature type="region of interest" description="Disordered" evidence="4">
    <location>
        <begin position="338"/>
        <end position="366"/>
    </location>
</feature>
<feature type="coiled-coil region" evidence="3">
    <location>
        <begin position="15"/>
        <end position="39"/>
    </location>
</feature>
<feature type="coiled-coil region" evidence="3">
    <location>
        <begin position="299"/>
        <end position="333"/>
    </location>
</feature>
<feature type="compositionally biased region" description="Basic and acidic residues" evidence="4">
    <location>
        <begin position="90"/>
        <end position="100"/>
    </location>
</feature>
<feature type="compositionally biased region" description="Low complexity" evidence="4">
    <location>
        <begin position="101"/>
        <end position="127"/>
    </location>
</feature>
<feature type="compositionally biased region" description="Polar residues" evidence="4">
    <location>
        <begin position="251"/>
        <end position="272"/>
    </location>
</feature>
<feature type="compositionally biased region" description="Basic and acidic residues" evidence="4">
    <location>
        <begin position="347"/>
        <end position="358"/>
    </location>
</feature>
<feature type="modified residue" description="Phosphoserine" evidence="2">
    <location>
        <position position="268"/>
    </location>
</feature>
<feature type="splice variant" id="VSP_032623" description="In isoform 2." evidence="5">
    <location>
        <begin position="1"/>
        <end position="104"/>
    </location>
</feature>
<feature type="sequence conflict" description="In Ref. 2; AAH62199." evidence="6" ref="2">
    <original>D</original>
    <variation>V</variation>
    <location>
        <position position="112"/>
    </location>
</feature>
<feature type="sequence conflict" description="In Ref. 2; AAH62199." evidence="6" ref="2">
    <original>Q</original>
    <variation>R</variation>
    <location>
        <position position="275"/>
    </location>
</feature>
<evidence type="ECO:0000250" key="1"/>
<evidence type="ECO:0000250" key="2">
    <source>
        <dbReference type="UniProtKB" id="P0CAP2"/>
    </source>
</evidence>
<evidence type="ECO:0000255" key="3"/>
<evidence type="ECO:0000256" key="4">
    <source>
        <dbReference type="SAM" id="MobiDB-lite"/>
    </source>
</evidence>
<evidence type="ECO:0000303" key="5">
    <source>
    </source>
</evidence>
<evidence type="ECO:0000305" key="6"/>
<protein>
    <recommendedName>
        <fullName>DNA-directed RNA polymerase II subunit GRINL1A</fullName>
    </recommendedName>
    <alternativeName>
        <fullName>DNA-directed RNA polymerase II subunit M</fullName>
    </alternativeName>
    <alternativeName>
        <fullName>Glutamate receptor-like protein 1A</fullName>
    </alternativeName>
</protein>
<proteinExistence type="evidence at transcript level"/>
<gene>
    <name type="primary">Polr2m</name>
    <name type="synonym">Grinl1a</name>
</gene>
<dbReference type="EMBL" id="AK002571">
    <property type="protein sequence ID" value="BAB22196.1"/>
    <property type="molecule type" value="mRNA"/>
</dbReference>
<dbReference type="EMBL" id="AK014316">
    <property type="protein sequence ID" value="BAB29267.1"/>
    <property type="molecule type" value="mRNA"/>
</dbReference>
<dbReference type="EMBL" id="AK051868">
    <property type="protein sequence ID" value="BAC34793.1"/>
    <property type="molecule type" value="mRNA"/>
</dbReference>
<dbReference type="EMBL" id="AK052037">
    <property type="protein sequence ID" value="BAC34836.1"/>
    <property type="molecule type" value="mRNA"/>
</dbReference>
<dbReference type="EMBL" id="AK079119">
    <property type="protein sequence ID" value="BAC37548.1"/>
    <property type="molecule type" value="mRNA"/>
</dbReference>
<dbReference type="EMBL" id="AK159924">
    <property type="protein sequence ID" value="BAE35486.1"/>
    <property type="molecule type" value="mRNA"/>
</dbReference>
<dbReference type="EMBL" id="AK166738">
    <property type="protein sequence ID" value="BAE38981.1"/>
    <property type="molecule type" value="mRNA"/>
</dbReference>
<dbReference type="EMBL" id="BC018502">
    <property type="protein sequence ID" value="AAH18502.1"/>
    <property type="molecule type" value="mRNA"/>
</dbReference>
<dbReference type="EMBL" id="BC062199">
    <property type="protein sequence ID" value="AAH62199.1"/>
    <property type="molecule type" value="mRNA"/>
</dbReference>
<dbReference type="EMBL" id="AH012404">
    <property type="protein sequence ID" value="AAO15648.1"/>
    <property type="molecule type" value="Genomic_DNA"/>
</dbReference>
<dbReference type="CCDS" id="CCDS23326.1">
    <molecule id="Q6P6I6-1"/>
</dbReference>
<dbReference type="CCDS" id="CCDS52853.1">
    <molecule id="Q6P6I6-2"/>
</dbReference>
<dbReference type="RefSeq" id="NP_001158265.1">
    <molecule id="Q6P6I6-2"/>
    <property type="nucleotide sequence ID" value="NM_001164793.1"/>
</dbReference>
<dbReference type="RefSeq" id="NP_848717.1">
    <molecule id="Q6P6I6-1"/>
    <property type="nucleotide sequence ID" value="NM_178602.3"/>
</dbReference>
<dbReference type="SMR" id="Q6P6I6"/>
<dbReference type="BioGRID" id="205716">
    <property type="interactions" value="1"/>
</dbReference>
<dbReference type="FunCoup" id="Q6P6I6">
    <property type="interactions" value="2114"/>
</dbReference>
<dbReference type="IntAct" id="Q6P6I6">
    <property type="interactions" value="1"/>
</dbReference>
<dbReference type="MINT" id="Q6P6I6"/>
<dbReference type="STRING" id="10090.ENSMUSP00000034720"/>
<dbReference type="GlyGen" id="Q6P6I6">
    <property type="glycosylation" value="1 site, 1 O-linked glycan (1 site)"/>
</dbReference>
<dbReference type="iPTMnet" id="Q6P6I6"/>
<dbReference type="PhosphoSitePlus" id="Q6P6I6"/>
<dbReference type="PaxDb" id="10090-ENSMUSP00000034720"/>
<dbReference type="PeptideAtlas" id="Q6P6I6"/>
<dbReference type="ProteomicsDB" id="271168">
    <molecule id="Q6P6I6-1"/>
</dbReference>
<dbReference type="ProteomicsDB" id="271169">
    <molecule id="Q6P6I6-2"/>
</dbReference>
<dbReference type="Pumba" id="Q6P6I6"/>
<dbReference type="Antibodypedia" id="57855">
    <property type="antibodies" value="96 antibodies from 14 providers"/>
</dbReference>
<dbReference type="DNASU" id="28015"/>
<dbReference type="Ensembl" id="ENSMUST00000034720.12">
    <molecule id="Q6P6I6-1"/>
    <property type="protein sequence ID" value="ENSMUSP00000034720.6"/>
    <property type="gene ID" value="ENSMUSG00000032199.14"/>
</dbReference>
<dbReference type="Ensembl" id="ENSMUST00000163972.2">
    <molecule id="Q6P6I6-2"/>
    <property type="protein sequence ID" value="ENSMUSP00000132335.2"/>
    <property type="gene ID" value="ENSMUSG00000032199.14"/>
</dbReference>
<dbReference type="GeneID" id="28015"/>
<dbReference type="KEGG" id="mmu:28015"/>
<dbReference type="UCSC" id="uc009qoy.2">
    <molecule id="Q6P6I6-1"/>
    <property type="organism name" value="mouse"/>
</dbReference>
<dbReference type="AGR" id="MGI:107282"/>
<dbReference type="CTD" id="81488"/>
<dbReference type="MGI" id="MGI:107282">
    <property type="gene designation" value="Polr2m"/>
</dbReference>
<dbReference type="VEuPathDB" id="HostDB:ENSMUSG00000032199"/>
<dbReference type="eggNOG" id="ENOG502S3HI">
    <property type="taxonomic scope" value="Eukaryota"/>
</dbReference>
<dbReference type="GeneTree" id="ENSGT00950000183065"/>
<dbReference type="HOGENOM" id="CLU_051512_0_0_1"/>
<dbReference type="InParanoid" id="Q6P6I6"/>
<dbReference type="OMA" id="YQQAFAH"/>
<dbReference type="OrthoDB" id="2408655at2759"/>
<dbReference type="PhylomeDB" id="Q6P6I6"/>
<dbReference type="TreeFam" id="TF332945"/>
<dbReference type="BioGRID-ORCS" id="28015">
    <property type="hits" value="16 hits in 80 CRISPR screens"/>
</dbReference>
<dbReference type="ChiTaRS" id="Polr2m">
    <property type="organism name" value="mouse"/>
</dbReference>
<dbReference type="PRO" id="PR:Q6P6I6"/>
<dbReference type="Proteomes" id="UP000000589">
    <property type="component" value="Chromosome 9"/>
</dbReference>
<dbReference type="RNAct" id="Q6P6I6">
    <property type="molecule type" value="protein"/>
</dbReference>
<dbReference type="Bgee" id="ENSMUSG00000032199">
    <property type="expression patterns" value="Expressed in somite and 272 other cell types or tissues"/>
</dbReference>
<dbReference type="ExpressionAtlas" id="Q6P6I6">
    <property type="expression patterns" value="baseline and differential"/>
</dbReference>
<dbReference type="GO" id="GO:0043025">
    <property type="term" value="C:neuronal cell body"/>
    <property type="evidence" value="ECO:0000315"/>
    <property type="project" value="UniProtKB"/>
</dbReference>
<dbReference type="GO" id="GO:0005635">
    <property type="term" value="C:nuclear envelope"/>
    <property type="evidence" value="ECO:0007669"/>
    <property type="project" value="Ensembl"/>
</dbReference>
<dbReference type="GO" id="GO:0005665">
    <property type="term" value="C:RNA polymerase II, core complex"/>
    <property type="evidence" value="ECO:0007669"/>
    <property type="project" value="Ensembl"/>
</dbReference>
<dbReference type="GO" id="GO:0097550">
    <property type="term" value="C:transcription preinitiation complex"/>
    <property type="evidence" value="ECO:0000250"/>
    <property type="project" value="UniProtKB"/>
</dbReference>
<dbReference type="GO" id="GO:0000993">
    <property type="term" value="F:RNA polymerase II complex binding"/>
    <property type="evidence" value="ECO:0007669"/>
    <property type="project" value="Ensembl"/>
</dbReference>
<dbReference type="GO" id="GO:0003711">
    <property type="term" value="F:transcription elongation factor activity"/>
    <property type="evidence" value="ECO:0007669"/>
    <property type="project" value="InterPro"/>
</dbReference>
<dbReference type="GO" id="GO:0051685">
    <property type="term" value="P:maintenance of ER location"/>
    <property type="evidence" value="ECO:0000315"/>
    <property type="project" value="UniProtKB"/>
</dbReference>
<dbReference type="GO" id="GO:0006368">
    <property type="term" value="P:transcription elongation by RNA polymerase II"/>
    <property type="evidence" value="ECO:0007669"/>
    <property type="project" value="InterPro"/>
</dbReference>
<dbReference type="InterPro" id="IPR026213">
    <property type="entry name" value="GRINL1"/>
</dbReference>
<dbReference type="InterPro" id="IPR051375">
    <property type="entry name" value="Tuftelin_GRINL1A/MYZAP/CCD68"/>
</dbReference>
<dbReference type="PANTHER" id="PTHR23171:SF5">
    <property type="entry name" value="DNA-DIRECTED RNA POLYMERASE II SUBUNIT GRINL1A"/>
    <property type="match status" value="1"/>
</dbReference>
<dbReference type="PANTHER" id="PTHR23171">
    <property type="entry name" value="GDOWN1"/>
    <property type="match status" value="1"/>
</dbReference>
<dbReference type="Pfam" id="PF15328">
    <property type="entry name" value="GCOM2"/>
    <property type="match status" value="1"/>
</dbReference>
<dbReference type="PRINTS" id="PR02085">
    <property type="entry name" value="POLR2GRINL1"/>
</dbReference>
<organism>
    <name type="scientific">Mus musculus</name>
    <name type="common">Mouse</name>
    <dbReference type="NCBI Taxonomy" id="10090"/>
    <lineage>
        <taxon>Eukaryota</taxon>
        <taxon>Metazoa</taxon>
        <taxon>Chordata</taxon>
        <taxon>Craniata</taxon>
        <taxon>Vertebrata</taxon>
        <taxon>Euteleostomi</taxon>
        <taxon>Mammalia</taxon>
        <taxon>Eutheria</taxon>
        <taxon>Euarchontoglires</taxon>
        <taxon>Glires</taxon>
        <taxon>Rodentia</taxon>
        <taxon>Myomorpha</taxon>
        <taxon>Muroidea</taxon>
        <taxon>Muridae</taxon>
        <taxon>Murinae</taxon>
        <taxon>Mus</taxon>
        <taxon>Mus</taxon>
    </lineage>
</organism>
<name>GRL1A_MOUSE</name>